<proteinExistence type="evidence at transcript level"/>
<organism>
    <name type="scientific">Xenopus tropicalis</name>
    <name type="common">Western clawed frog</name>
    <name type="synonym">Silurana tropicalis</name>
    <dbReference type="NCBI Taxonomy" id="8364"/>
    <lineage>
        <taxon>Eukaryota</taxon>
        <taxon>Metazoa</taxon>
        <taxon>Chordata</taxon>
        <taxon>Craniata</taxon>
        <taxon>Vertebrata</taxon>
        <taxon>Euteleostomi</taxon>
        <taxon>Amphibia</taxon>
        <taxon>Batrachia</taxon>
        <taxon>Anura</taxon>
        <taxon>Pipoidea</taxon>
        <taxon>Pipidae</taxon>
        <taxon>Xenopodinae</taxon>
        <taxon>Xenopus</taxon>
        <taxon>Silurana</taxon>
    </lineage>
</organism>
<sequence>MRLIQNMCTITEYPPGTHTECASSSAGTASSRVIKIAVVGGSGVGKTALVVRFLTKRFIGDYERNAGNLYSRQVQIDGMNLAIQVQDTPGVQINDQNLDSNEQLNKSLRWADAVVIVFSITDCKSFDLISRLHQHARQLHPDNRIPIVIVANKADLLHLKQVEPQHGLQLANMLGCTFYEVSVSENYIDVYNAFQVLCKEISKQQNTGTPERRKNSLIPRPKSPNMQDLKRRFKQALSAKVRTATSV</sequence>
<name>RSLBB_XENTR</name>
<feature type="chain" id="PRO_0000308370" description="Ras-like protein family member 11B">
    <location>
        <begin position="1"/>
        <end position="247"/>
    </location>
</feature>
<feature type="region of interest" description="Small GTPase-like">
    <location>
        <begin position="29"/>
        <end position="247"/>
    </location>
</feature>
<feature type="region of interest" description="Disordered" evidence="4">
    <location>
        <begin position="205"/>
        <end position="228"/>
    </location>
</feature>
<feature type="binding site" evidence="2">
    <location>
        <begin position="40"/>
        <end position="47"/>
    </location>
    <ligand>
        <name>GTP</name>
        <dbReference type="ChEBI" id="CHEBI:37565"/>
    </ligand>
</feature>
<feature type="binding site" evidence="2">
    <location>
        <begin position="87"/>
        <end position="91"/>
    </location>
    <ligand>
        <name>GTP</name>
        <dbReference type="ChEBI" id="CHEBI:37565"/>
    </ligand>
</feature>
<feature type="binding site" evidence="2">
    <location>
        <begin position="152"/>
        <end position="155"/>
    </location>
    <ligand>
        <name>GTP</name>
        <dbReference type="ChEBI" id="CHEBI:37565"/>
    </ligand>
</feature>
<gene>
    <name evidence="5" type="primary">rasl11b</name>
</gene>
<evidence type="ECO:0000250" key="1">
    <source>
        <dbReference type="UniProtKB" id="P01116"/>
    </source>
</evidence>
<evidence type="ECO:0000250" key="2">
    <source>
        <dbReference type="UniProtKB" id="Q96A58"/>
    </source>
</evidence>
<evidence type="ECO:0000255" key="3"/>
<evidence type="ECO:0000256" key="4">
    <source>
        <dbReference type="SAM" id="MobiDB-lite"/>
    </source>
</evidence>
<evidence type="ECO:0000312" key="5">
    <source>
        <dbReference type="EMBL" id="AAH89714.1"/>
    </source>
</evidence>
<accession>Q5FVY2</accession>
<keyword id="KW-0342">GTP-binding</keyword>
<keyword id="KW-0378">Hydrolase</keyword>
<keyword id="KW-0547">Nucleotide-binding</keyword>
<keyword id="KW-1185">Reference proteome</keyword>
<reference evidence="5" key="1">
    <citation type="submission" date="2005-02" db="EMBL/GenBank/DDBJ databases">
        <authorList>
            <consortium name="NIH - Xenopus Gene Collection (XGC) project"/>
        </authorList>
    </citation>
    <scope>NUCLEOTIDE SEQUENCE [LARGE SCALE MRNA]</scope>
</reference>
<dbReference type="EC" id="3.6.5.2" evidence="1"/>
<dbReference type="EMBL" id="BC089714">
    <property type="protein sequence ID" value="AAH89714.1"/>
    <property type="molecule type" value="mRNA"/>
</dbReference>
<dbReference type="RefSeq" id="NP_001015774.1">
    <property type="nucleotide sequence ID" value="NM_001015774.1"/>
</dbReference>
<dbReference type="SMR" id="Q5FVY2"/>
<dbReference type="FunCoup" id="Q5FVY2">
    <property type="interactions" value="318"/>
</dbReference>
<dbReference type="STRING" id="8364.ENSXETP00000048353"/>
<dbReference type="PaxDb" id="8364-ENSXETP00000025536"/>
<dbReference type="DNASU" id="548491"/>
<dbReference type="GeneID" id="548491"/>
<dbReference type="KEGG" id="xtr:548491"/>
<dbReference type="AGR" id="Xenbase:XB-GENE-491056"/>
<dbReference type="CTD" id="65997"/>
<dbReference type="Xenbase" id="XB-GENE-491056">
    <property type="gene designation" value="rasl11b"/>
</dbReference>
<dbReference type="eggNOG" id="KOG0395">
    <property type="taxonomic scope" value="Eukaryota"/>
</dbReference>
<dbReference type="HOGENOM" id="CLU_041217_9_7_1"/>
<dbReference type="InParanoid" id="Q5FVY2"/>
<dbReference type="OMA" id="KEVEPQH"/>
<dbReference type="OrthoDB" id="18798at2759"/>
<dbReference type="PhylomeDB" id="Q5FVY2"/>
<dbReference type="TreeFam" id="TF318030"/>
<dbReference type="Proteomes" id="UP000008143">
    <property type="component" value="Chromosome 1"/>
</dbReference>
<dbReference type="Bgee" id="ENSXETG00000011677">
    <property type="expression patterns" value="Expressed in heart and 13 other cell types or tissues"/>
</dbReference>
<dbReference type="ExpressionAtlas" id="Q5FVY2">
    <property type="expression patterns" value="baseline"/>
</dbReference>
<dbReference type="GO" id="GO:0003925">
    <property type="term" value="F:G protein activity"/>
    <property type="evidence" value="ECO:0007669"/>
    <property type="project" value="UniProtKB-EC"/>
</dbReference>
<dbReference type="GO" id="GO:0005525">
    <property type="term" value="F:GTP binding"/>
    <property type="evidence" value="ECO:0007669"/>
    <property type="project" value="UniProtKB-KW"/>
</dbReference>
<dbReference type="GO" id="GO:0048382">
    <property type="term" value="P:mesendoderm development"/>
    <property type="evidence" value="ECO:0007669"/>
    <property type="project" value="Ensembl"/>
</dbReference>
<dbReference type="CDD" id="cd04146">
    <property type="entry name" value="RERG_RasL11_like"/>
    <property type="match status" value="1"/>
</dbReference>
<dbReference type="FunFam" id="3.40.50.300:FF:000718">
    <property type="entry name" value="Ras-like protein family member 11A"/>
    <property type="match status" value="1"/>
</dbReference>
<dbReference type="Gene3D" id="3.40.50.300">
    <property type="entry name" value="P-loop containing nucleotide triphosphate hydrolases"/>
    <property type="match status" value="1"/>
</dbReference>
<dbReference type="InterPro" id="IPR027417">
    <property type="entry name" value="P-loop_NTPase"/>
</dbReference>
<dbReference type="InterPro" id="IPR051065">
    <property type="entry name" value="Ras-related_GTPase"/>
</dbReference>
<dbReference type="InterPro" id="IPR005225">
    <property type="entry name" value="Small_GTP-bd"/>
</dbReference>
<dbReference type="InterPro" id="IPR001806">
    <property type="entry name" value="Small_GTPase"/>
</dbReference>
<dbReference type="NCBIfam" id="TIGR00231">
    <property type="entry name" value="small_GTP"/>
    <property type="match status" value="1"/>
</dbReference>
<dbReference type="PANTHER" id="PTHR45704">
    <property type="entry name" value="RAS-LIKE FAMILY MEMBER 11"/>
    <property type="match status" value="1"/>
</dbReference>
<dbReference type="Pfam" id="PF00071">
    <property type="entry name" value="Ras"/>
    <property type="match status" value="1"/>
</dbReference>
<dbReference type="PRINTS" id="PR00449">
    <property type="entry name" value="RASTRNSFRMNG"/>
</dbReference>
<dbReference type="SMART" id="SM00175">
    <property type="entry name" value="RAB"/>
    <property type="match status" value="1"/>
</dbReference>
<dbReference type="SMART" id="SM00173">
    <property type="entry name" value="RAS"/>
    <property type="match status" value="1"/>
</dbReference>
<dbReference type="SMART" id="SM00174">
    <property type="entry name" value="RHO"/>
    <property type="match status" value="1"/>
</dbReference>
<dbReference type="SUPFAM" id="SSF52540">
    <property type="entry name" value="P-loop containing nucleoside triphosphate hydrolases"/>
    <property type="match status" value="1"/>
</dbReference>
<dbReference type="PROSITE" id="PS51421">
    <property type="entry name" value="RAS"/>
    <property type="match status" value="1"/>
</dbReference>
<protein>
    <recommendedName>
        <fullName>Ras-like protein family member 11B</fullName>
        <ecNumber evidence="1">3.6.5.2</ecNumber>
    </recommendedName>
</protein>
<comment type="catalytic activity">
    <reaction evidence="1">
        <text>GTP + H2O = GDP + phosphate + H(+)</text>
        <dbReference type="Rhea" id="RHEA:19669"/>
        <dbReference type="ChEBI" id="CHEBI:15377"/>
        <dbReference type="ChEBI" id="CHEBI:15378"/>
        <dbReference type="ChEBI" id="CHEBI:37565"/>
        <dbReference type="ChEBI" id="CHEBI:43474"/>
        <dbReference type="ChEBI" id="CHEBI:58189"/>
        <dbReference type="EC" id="3.6.5.2"/>
    </reaction>
</comment>
<comment type="similarity">
    <text evidence="3">Belongs to the small GTPase superfamily. Ras family.</text>
</comment>